<evidence type="ECO:0000255" key="1">
    <source>
        <dbReference type="HAMAP-Rule" id="MF_00555"/>
    </source>
</evidence>
<keyword id="KW-0028">Amino-acid biosynthesis</keyword>
<keyword id="KW-0061">Asparagine biosynthesis</keyword>
<keyword id="KW-0067">ATP-binding</keyword>
<keyword id="KW-0963">Cytoplasm</keyword>
<keyword id="KW-0436">Ligase</keyword>
<keyword id="KW-0547">Nucleotide-binding</keyword>
<protein>
    <recommendedName>
        <fullName evidence="1">Aspartate--ammonia ligase</fullName>
        <ecNumber evidence="1">6.3.1.1</ecNumber>
    </recommendedName>
    <alternativeName>
        <fullName evidence="1">Asparagine synthetase A</fullName>
    </alternativeName>
</protein>
<accession>B7NR46</accession>
<organism>
    <name type="scientific">Escherichia coli O7:K1 (strain IAI39 / ExPEC)</name>
    <dbReference type="NCBI Taxonomy" id="585057"/>
    <lineage>
        <taxon>Bacteria</taxon>
        <taxon>Pseudomonadati</taxon>
        <taxon>Pseudomonadota</taxon>
        <taxon>Gammaproteobacteria</taxon>
        <taxon>Enterobacterales</taxon>
        <taxon>Enterobacteriaceae</taxon>
        <taxon>Escherichia</taxon>
    </lineage>
</organism>
<name>ASNA_ECO7I</name>
<proteinExistence type="inferred from homology"/>
<feature type="chain" id="PRO_1000129113" description="Aspartate--ammonia ligase">
    <location>
        <begin position="1"/>
        <end position="330"/>
    </location>
</feature>
<dbReference type="EC" id="6.3.1.1" evidence="1"/>
<dbReference type="EMBL" id="CU928164">
    <property type="protein sequence ID" value="CAR20454.1"/>
    <property type="molecule type" value="Genomic_DNA"/>
</dbReference>
<dbReference type="RefSeq" id="WP_000845132.1">
    <property type="nucleotide sequence ID" value="NC_011750.1"/>
</dbReference>
<dbReference type="RefSeq" id="YP_002410223.1">
    <property type="nucleotide sequence ID" value="NC_011750.1"/>
</dbReference>
<dbReference type="SMR" id="B7NR46"/>
<dbReference type="STRING" id="585057.ECIAI39_4348"/>
<dbReference type="KEGG" id="ect:ECIAI39_4348"/>
<dbReference type="PATRIC" id="fig|585057.6.peg.4494"/>
<dbReference type="HOGENOM" id="CLU_071543_0_0_6"/>
<dbReference type="UniPathway" id="UPA00134">
    <property type="reaction ID" value="UER00194"/>
</dbReference>
<dbReference type="Proteomes" id="UP000000749">
    <property type="component" value="Chromosome"/>
</dbReference>
<dbReference type="GO" id="GO:0005829">
    <property type="term" value="C:cytosol"/>
    <property type="evidence" value="ECO:0007669"/>
    <property type="project" value="TreeGrafter"/>
</dbReference>
<dbReference type="GO" id="GO:0004071">
    <property type="term" value="F:aspartate-ammonia ligase activity"/>
    <property type="evidence" value="ECO:0007669"/>
    <property type="project" value="UniProtKB-UniRule"/>
</dbReference>
<dbReference type="GO" id="GO:0005524">
    <property type="term" value="F:ATP binding"/>
    <property type="evidence" value="ECO:0007669"/>
    <property type="project" value="UniProtKB-UniRule"/>
</dbReference>
<dbReference type="GO" id="GO:0070981">
    <property type="term" value="P:L-asparagine biosynthetic process"/>
    <property type="evidence" value="ECO:0007669"/>
    <property type="project" value="UniProtKB-UniRule"/>
</dbReference>
<dbReference type="CDD" id="cd00645">
    <property type="entry name" value="AsnA"/>
    <property type="match status" value="1"/>
</dbReference>
<dbReference type="FunFam" id="3.30.930.10:FF:000025">
    <property type="entry name" value="Aspartate--ammonia ligase"/>
    <property type="match status" value="1"/>
</dbReference>
<dbReference type="Gene3D" id="3.30.930.10">
    <property type="entry name" value="Bira Bifunctional Protein, Domain 2"/>
    <property type="match status" value="1"/>
</dbReference>
<dbReference type="HAMAP" id="MF_00555">
    <property type="entry name" value="AsnA"/>
    <property type="match status" value="1"/>
</dbReference>
<dbReference type="InterPro" id="IPR006195">
    <property type="entry name" value="aa-tRNA-synth_II"/>
</dbReference>
<dbReference type="InterPro" id="IPR045864">
    <property type="entry name" value="aa-tRNA-synth_II/BPL/LPL"/>
</dbReference>
<dbReference type="InterPro" id="IPR004618">
    <property type="entry name" value="AsnA"/>
</dbReference>
<dbReference type="NCBIfam" id="TIGR00669">
    <property type="entry name" value="asnA"/>
    <property type="match status" value="1"/>
</dbReference>
<dbReference type="PANTHER" id="PTHR30073">
    <property type="entry name" value="ASPARTATE--AMMONIA LIGASE"/>
    <property type="match status" value="1"/>
</dbReference>
<dbReference type="PANTHER" id="PTHR30073:SF5">
    <property type="entry name" value="ASPARTATE--AMMONIA LIGASE"/>
    <property type="match status" value="1"/>
</dbReference>
<dbReference type="Pfam" id="PF03590">
    <property type="entry name" value="AsnA"/>
    <property type="match status" value="1"/>
</dbReference>
<dbReference type="PIRSF" id="PIRSF001555">
    <property type="entry name" value="Asp_ammon_ligase"/>
    <property type="match status" value="1"/>
</dbReference>
<dbReference type="SUPFAM" id="SSF55681">
    <property type="entry name" value="Class II aaRS and biotin synthetases"/>
    <property type="match status" value="1"/>
</dbReference>
<dbReference type="PROSITE" id="PS50862">
    <property type="entry name" value="AA_TRNA_LIGASE_II"/>
    <property type="match status" value="1"/>
</dbReference>
<reference key="1">
    <citation type="journal article" date="2009" name="PLoS Genet.">
        <title>Organised genome dynamics in the Escherichia coli species results in highly diverse adaptive paths.</title>
        <authorList>
            <person name="Touchon M."/>
            <person name="Hoede C."/>
            <person name="Tenaillon O."/>
            <person name="Barbe V."/>
            <person name="Baeriswyl S."/>
            <person name="Bidet P."/>
            <person name="Bingen E."/>
            <person name="Bonacorsi S."/>
            <person name="Bouchier C."/>
            <person name="Bouvet O."/>
            <person name="Calteau A."/>
            <person name="Chiapello H."/>
            <person name="Clermont O."/>
            <person name="Cruveiller S."/>
            <person name="Danchin A."/>
            <person name="Diard M."/>
            <person name="Dossat C."/>
            <person name="Karoui M.E."/>
            <person name="Frapy E."/>
            <person name="Garry L."/>
            <person name="Ghigo J.M."/>
            <person name="Gilles A.M."/>
            <person name="Johnson J."/>
            <person name="Le Bouguenec C."/>
            <person name="Lescat M."/>
            <person name="Mangenot S."/>
            <person name="Martinez-Jehanne V."/>
            <person name="Matic I."/>
            <person name="Nassif X."/>
            <person name="Oztas S."/>
            <person name="Petit M.A."/>
            <person name="Pichon C."/>
            <person name="Rouy Z."/>
            <person name="Ruf C.S."/>
            <person name="Schneider D."/>
            <person name="Tourret J."/>
            <person name="Vacherie B."/>
            <person name="Vallenet D."/>
            <person name="Medigue C."/>
            <person name="Rocha E.P.C."/>
            <person name="Denamur E."/>
        </authorList>
    </citation>
    <scope>NUCLEOTIDE SEQUENCE [LARGE SCALE GENOMIC DNA]</scope>
    <source>
        <strain>IAI39 / ExPEC</strain>
    </source>
</reference>
<gene>
    <name evidence="1" type="primary">asnA</name>
    <name type="ordered locus">ECIAI39_4348</name>
</gene>
<sequence>MKTAYIAKQRQISFVKSHFSRQLEERLGLIEVQAPILSRVGDGTQDNLSGCEKAVQVKVKALPDAQFEVVHSLAKWKRQTLGQHDFSAGEGLYTHMKALRPDEDRLSSLHSVYVDQWDWERVMGDGERQFSTLKSTVEAIWEGIKATEAAVSEEFGLAPFLPDQIHFVHSQELLSRYPELDAKGRERAIAKDLGAVFLVGIGGKLSDGHRHDVRAPDYDDWSTPSELGHAGLNGDILVWNPVLEDAFELSSMGIRVDADTLKHQLALTGDEDRLELEWHQALLRGEMPQTIGGGIGQSRLTMLLLQLPHIGQVQCGVWPAAVRESVPSLL</sequence>
<comment type="catalytic activity">
    <reaction evidence="1">
        <text>L-aspartate + NH4(+) + ATP = L-asparagine + AMP + diphosphate + H(+)</text>
        <dbReference type="Rhea" id="RHEA:11372"/>
        <dbReference type="ChEBI" id="CHEBI:15378"/>
        <dbReference type="ChEBI" id="CHEBI:28938"/>
        <dbReference type="ChEBI" id="CHEBI:29991"/>
        <dbReference type="ChEBI" id="CHEBI:30616"/>
        <dbReference type="ChEBI" id="CHEBI:33019"/>
        <dbReference type="ChEBI" id="CHEBI:58048"/>
        <dbReference type="ChEBI" id="CHEBI:456215"/>
        <dbReference type="EC" id="6.3.1.1"/>
    </reaction>
</comment>
<comment type="pathway">
    <text evidence="1">Amino-acid biosynthesis; L-asparagine biosynthesis; L-asparagine from L-aspartate (ammonia route): step 1/1.</text>
</comment>
<comment type="subcellular location">
    <subcellularLocation>
        <location evidence="1">Cytoplasm</location>
    </subcellularLocation>
</comment>
<comment type="similarity">
    <text evidence="1">Belongs to the class-II aminoacyl-tRNA synthetase family. AsnA subfamily.</text>
</comment>